<dbReference type="EMBL" id="L35043">
    <property type="protein sequence ID" value="AAF36751.1"/>
    <property type="molecule type" value="Genomic_DNA"/>
</dbReference>
<dbReference type="EMBL" id="AE015450">
    <property type="status" value="NOT_ANNOTATED_CDS"/>
    <property type="molecule type" value="Genomic_DNA"/>
</dbReference>
<dbReference type="SMR" id="Q9KX72"/>
<dbReference type="OrthoDB" id="197660at2"/>
<dbReference type="Proteomes" id="UP000001418">
    <property type="component" value="Chromosome"/>
</dbReference>
<dbReference type="GO" id="GO:0005737">
    <property type="term" value="C:cytoplasm"/>
    <property type="evidence" value="ECO:0007669"/>
    <property type="project" value="UniProtKB-ARBA"/>
</dbReference>
<dbReference type="GO" id="GO:1990904">
    <property type="term" value="C:ribonucleoprotein complex"/>
    <property type="evidence" value="ECO:0007669"/>
    <property type="project" value="UniProtKB-KW"/>
</dbReference>
<dbReference type="GO" id="GO:0005840">
    <property type="term" value="C:ribosome"/>
    <property type="evidence" value="ECO:0007669"/>
    <property type="project" value="UniProtKB-KW"/>
</dbReference>
<dbReference type="GO" id="GO:0003735">
    <property type="term" value="F:structural constituent of ribosome"/>
    <property type="evidence" value="ECO:0007669"/>
    <property type="project" value="InterPro"/>
</dbReference>
<dbReference type="GO" id="GO:0006412">
    <property type="term" value="P:translation"/>
    <property type="evidence" value="ECO:0007669"/>
    <property type="project" value="UniProtKB-UniRule"/>
</dbReference>
<dbReference type="Gene3D" id="2.20.28.120">
    <property type="entry name" value="Ribosomal protein L33"/>
    <property type="match status" value="1"/>
</dbReference>
<dbReference type="HAMAP" id="MF_00294">
    <property type="entry name" value="Ribosomal_bL33"/>
    <property type="match status" value="1"/>
</dbReference>
<dbReference type="InterPro" id="IPR001705">
    <property type="entry name" value="Ribosomal_bL33"/>
</dbReference>
<dbReference type="InterPro" id="IPR018264">
    <property type="entry name" value="Ribosomal_bL33_CS"/>
</dbReference>
<dbReference type="InterPro" id="IPR038584">
    <property type="entry name" value="Ribosomal_bL33_sf"/>
</dbReference>
<dbReference type="InterPro" id="IPR011332">
    <property type="entry name" value="Ribosomal_zn-bd"/>
</dbReference>
<dbReference type="NCBIfam" id="NF001764">
    <property type="entry name" value="PRK00504.1"/>
    <property type="match status" value="1"/>
</dbReference>
<dbReference type="NCBIfam" id="TIGR01023">
    <property type="entry name" value="rpmG_bact"/>
    <property type="match status" value="1"/>
</dbReference>
<dbReference type="Pfam" id="PF00471">
    <property type="entry name" value="Ribosomal_L33"/>
    <property type="match status" value="1"/>
</dbReference>
<dbReference type="SUPFAM" id="SSF57829">
    <property type="entry name" value="Zn-binding ribosomal proteins"/>
    <property type="match status" value="1"/>
</dbReference>
<dbReference type="PROSITE" id="PS00582">
    <property type="entry name" value="RIBOSOMAL_L33"/>
    <property type="match status" value="1"/>
</dbReference>
<accession>Q9KX72</accession>
<keyword id="KW-1185">Reference proteome</keyword>
<keyword id="KW-0687">Ribonucleoprotein</keyword>
<keyword id="KW-0689">Ribosomal protein</keyword>
<reference key="1">
    <citation type="submission" date="2000-02" db="EMBL/GenBank/DDBJ databases">
        <authorList>
            <person name="Skamrov A.V."/>
            <person name="Feoktistova E.S."/>
            <person name="Gol'dman M.A."/>
            <person name="Bibilashvili R.S."/>
        </authorList>
    </citation>
    <scope>NUCLEOTIDE SEQUENCE [GENOMIC DNA]</scope>
    <source>
        <strain>A5969Var.B</strain>
    </source>
</reference>
<reference key="2">
    <citation type="journal article" date="2003" name="Microbiology">
        <title>The complete genome sequence of the avian pathogen Mycoplasma gallisepticum strain R(low).</title>
        <authorList>
            <person name="Papazisi L."/>
            <person name="Gorton T.S."/>
            <person name="Kutish G."/>
            <person name="Markham P.F."/>
            <person name="Browning G.F."/>
            <person name="Nguyen D.K."/>
            <person name="Swartzell S."/>
            <person name="Madan A."/>
            <person name="Mahairas G."/>
            <person name="Geary S.J."/>
        </authorList>
    </citation>
    <scope>NUCLEOTIDE SEQUENCE [LARGE SCALE GENOMIC DNA]</scope>
    <source>
        <strain>R(low / passage 15 / clone 2)</strain>
    </source>
</reference>
<evidence type="ECO:0000255" key="1">
    <source>
        <dbReference type="HAMAP-Rule" id="MF_00294"/>
    </source>
</evidence>
<evidence type="ECO:0000305" key="2"/>
<name>RL332_MYCGA</name>
<gene>
    <name type="primary">rpmG 2</name>
    <name type="synonym">rpl33</name>
    <name type="ordered locus">MYCGA6485</name>
    <name type="ORF">MGA_0474.1</name>
</gene>
<proteinExistence type="inferred from homology"/>
<sequence length="48" mass="5724">MRKKIILICEHCLNRNYTTTRSKLETTRLVLNKYCSSCNQKTVHKESH</sequence>
<feature type="chain" id="PRO_0000170186" description="Large ribosomal subunit protein bL33B">
    <location>
        <begin position="1"/>
        <end position="48"/>
    </location>
</feature>
<comment type="similarity">
    <text evidence="2">Belongs to the bacterial ribosomal protein bL33 family.</text>
</comment>
<organism>
    <name type="scientific">Mycoplasmoides gallisepticum (strain R(low / passage 15 / clone 2))</name>
    <name type="common">Mycoplasma gallisepticum</name>
    <dbReference type="NCBI Taxonomy" id="710127"/>
    <lineage>
        <taxon>Bacteria</taxon>
        <taxon>Bacillati</taxon>
        <taxon>Mycoplasmatota</taxon>
        <taxon>Mycoplasmoidales</taxon>
        <taxon>Mycoplasmoidaceae</taxon>
        <taxon>Mycoplasmoides</taxon>
    </lineage>
</organism>
<protein>
    <recommendedName>
        <fullName evidence="1">Large ribosomal subunit protein bL33B</fullName>
    </recommendedName>
    <alternativeName>
        <fullName>50S ribosomal protein L33 2</fullName>
    </alternativeName>
</protein>